<gene>
    <name evidence="1" type="primary">rpmC</name>
    <name evidence="1" type="synonym">rpl29</name>
    <name type="ordered locus">asl4207</name>
</gene>
<dbReference type="EMBL" id="BA000019">
    <property type="protein sequence ID" value="BAB75906.1"/>
    <property type="molecule type" value="Genomic_DNA"/>
</dbReference>
<dbReference type="PIR" id="AH2331">
    <property type="entry name" value="AH2331"/>
</dbReference>
<dbReference type="RefSeq" id="WP_010998345.1">
    <property type="nucleotide sequence ID" value="NZ_RSCN01000010.1"/>
</dbReference>
<dbReference type="SMR" id="Q8YPI7"/>
<dbReference type="STRING" id="103690.gene:10496256"/>
<dbReference type="GeneID" id="58723357"/>
<dbReference type="KEGG" id="ana:asl4207"/>
<dbReference type="eggNOG" id="COG0255">
    <property type="taxonomic scope" value="Bacteria"/>
</dbReference>
<dbReference type="OrthoDB" id="9815192at2"/>
<dbReference type="Proteomes" id="UP000002483">
    <property type="component" value="Chromosome"/>
</dbReference>
<dbReference type="GO" id="GO:0022625">
    <property type="term" value="C:cytosolic large ribosomal subunit"/>
    <property type="evidence" value="ECO:0007669"/>
    <property type="project" value="TreeGrafter"/>
</dbReference>
<dbReference type="GO" id="GO:0003735">
    <property type="term" value="F:structural constituent of ribosome"/>
    <property type="evidence" value="ECO:0007669"/>
    <property type="project" value="InterPro"/>
</dbReference>
<dbReference type="GO" id="GO:0006412">
    <property type="term" value="P:translation"/>
    <property type="evidence" value="ECO:0007669"/>
    <property type="project" value="UniProtKB-UniRule"/>
</dbReference>
<dbReference type="CDD" id="cd00427">
    <property type="entry name" value="Ribosomal_L29_HIP"/>
    <property type="match status" value="1"/>
</dbReference>
<dbReference type="Gene3D" id="1.10.287.310">
    <property type="match status" value="1"/>
</dbReference>
<dbReference type="HAMAP" id="MF_00374">
    <property type="entry name" value="Ribosomal_uL29"/>
    <property type="match status" value="1"/>
</dbReference>
<dbReference type="InterPro" id="IPR050063">
    <property type="entry name" value="Ribosomal_protein_uL29"/>
</dbReference>
<dbReference type="InterPro" id="IPR001854">
    <property type="entry name" value="Ribosomal_uL29"/>
</dbReference>
<dbReference type="InterPro" id="IPR018254">
    <property type="entry name" value="Ribosomal_uL29_CS"/>
</dbReference>
<dbReference type="InterPro" id="IPR036049">
    <property type="entry name" value="Ribosomal_uL29_sf"/>
</dbReference>
<dbReference type="NCBIfam" id="TIGR00012">
    <property type="entry name" value="L29"/>
    <property type="match status" value="1"/>
</dbReference>
<dbReference type="PANTHER" id="PTHR10916">
    <property type="entry name" value="60S RIBOSOMAL PROTEIN L35/50S RIBOSOMAL PROTEIN L29"/>
    <property type="match status" value="1"/>
</dbReference>
<dbReference type="PANTHER" id="PTHR10916:SF0">
    <property type="entry name" value="LARGE RIBOSOMAL SUBUNIT PROTEIN UL29C"/>
    <property type="match status" value="1"/>
</dbReference>
<dbReference type="Pfam" id="PF00831">
    <property type="entry name" value="Ribosomal_L29"/>
    <property type="match status" value="1"/>
</dbReference>
<dbReference type="SUPFAM" id="SSF46561">
    <property type="entry name" value="Ribosomal protein L29 (L29p)"/>
    <property type="match status" value="1"/>
</dbReference>
<dbReference type="PROSITE" id="PS00579">
    <property type="entry name" value="RIBOSOMAL_L29"/>
    <property type="match status" value="1"/>
</dbReference>
<evidence type="ECO:0000255" key="1">
    <source>
        <dbReference type="HAMAP-Rule" id="MF_00374"/>
    </source>
</evidence>
<evidence type="ECO:0000305" key="2"/>
<name>RL29_NOSS1</name>
<comment type="similarity">
    <text evidence="1">Belongs to the universal ribosomal protein uL29 family.</text>
</comment>
<proteinExistence type="inferred from homology"/>
<feature type="chain" id="PRO_0000130344" description="Large ribosomal subunit protein uL29">
    <location>
        <begin position="1"/>
        <end position="74"/>
    </location>
</feature>
<accession>Q8YPI7</accession>
<reference key="1">
    <citation type="journal article" date="2001" name="DNA Res.">
        <title>Complete genomic sequence of the filamentous nitrogen-fixing cyanobacterium Anabaena sp. strain PCC 7120.</title>
        <authorList>
            <person name="Kaneko T."/>
            <person name="Nakamura Y."/>
            <person name="Wolk C.P."/>
            <person name="Kuritz T."/>
            <person name="Sasamoto S."/>
            <person name="Watanabe A."/>
            <person name="Iriguchi M."/>
            <person name="Ishikawa A."/>
            <person name="Kawashima K."/>
            <person name="Kimura T."/>
            <person name="Kishida Y."/>
            <person name="Kohara M."/>
            <person name="Matsumoto M."/>
            <person name="Matsuno A."/>
            <person name="Muraki A."/>
            <person name="Nakazaki N."/>
            <person name="Shimpo S."/>
            <person name="Sugimoto M."/>
            <person name="Takazawa M."/>
            <person name="Yamada M."/>
            <person name="Yasuda M."/>
            <person name="Tabata S."/>
        </authorList>
    </citation>
    <scope>NUCLEOTIDE SEQUENCE [LARGE SCALE GENOMIC DNA]</scope>
    <source>
        <strain>PCC 7120 / SAG 25.82 / UTEX 2576</strain>
    </source>
</reference>
<sequence>MPLPKISEARELSDERLVEEITAVKKQLFQLRLQKATRQLDKPHQFRHARHRLAQLLTVEGERKRAAATQSPQE</sequence>
<keyword id="KW-1185">Reference proteome</keyword>
<keyword id="KW-0687">Ribonucleoprotein</keyword>
<keyword id="KW-0689">Ribosomal protein</keyword>
<organism>
    <name type="scientific">Nostoc sp. (strain PCC 7120 / SAG 25.82 / UTEX 2576)</name>
    <dbReference type="NCBI Taxonomy" id="103690"/>
    <lineage>
        <taxon>Bacteria</taxon>
        <taxon>Bacillati</taxon>
        <taxon>Cyanobacteriota</taxon>
        <taxon>Cyanophyceae</taxon>
        <taxon>Nostocales</taxon>
        <taxon>Nostocaceae</taxon>
        <taxon>Nostoc</taxon>
    </lineage>
</organism>
<protein>
    <recommendedName>
        <fullName evidence="1">Large ribosomal subunit protein uL29</fullName>
    </recommendedName>
    <alternativeName>
        <fullName evidence="2">50S ribosomal protein L29</fullName>
    </alternativeName>
</protein>